<organism>
    <name type="scientific">Psychrobacter cryohalolentis (strain ATCC BAA-1226 / DSM 17306 / VKM B-2378 / K5)</name>
    <dbReference type="NCBI Taxonomy" id="335284"/>
    <lineage>
        <taxon>Bacteria</taxon>
        <taxon>Pseudomonadati</taxon>
        <taxon>Pseudomonadota</taxon>
        <taxon>Gammaproteobacteria</taxon>
        <taxon>Moraxellales</taxon>
        <taxon>Moraxellaceae</taxon>
        <taxon>Psychrobacter</taxon>
    </lineage>
</organism>
<reference key="1">
    <citation type="submission" date="2006-03" db="EMBL/GenBank/DDBJ databases">
        <title>Complete sequence of chromosome of Psychrobacter cryohalolentis K5.</title>
        <authorList>
            <consortium name="US DOE Joint Genome Institute"/>
            <person name="Copeland A."/>
            <person name="Lucas S."/>
            <person name="Lapidus A."/>
            <person name="Barry K."/>
            <person name="Detter J.C."/>
            <person name="Glavina T."/>
            <person name="Hammon N."/>
            <person name="Israni S."/>
            <person name="Dalin E."/>
            <person name="Tice H."/>
            <person name="Pitluck S."/>
            <person name="Brettin T."/>
            <person name="Bruce D."/>
            <person name="Han C."/>
            <person name="Tapia R."/>
            <person name="Sims D.R."/>
            <person name="Gilna P."/>
            <person name="Schmutz J."/>
            <person name="Larimer F."/>
            <person name="Land M."/>
            <person name="Hauser L."/>
            <person name="Kyrpides N."/>
            <person name="Kim E."/>
            <person name="Richardson P."/>
        </authorList>
    </citation>
    <scope>NUCLEOTIDE SEQUENCE [LARGE SCALE GENOMIC DNA]</scope>
    <source>
        <strain>ATCC BAA-1226 / DSM 17306 / VKM B-2378 / K5</strain>
    </source>
</reference>
<proteinExistence type="inferred from homology"/>
<comment type="function">
    <text evidence="1">One of the primary rRNA binding proteins, it binds directly to 16S rRNA where it nucleates assembly of the body of the 30S subunit.</text>
</comment>
<comment type="function">
    <text evidence="1">With S5 and S12 plays an important role in translational accuracy.</text>
</comment>
<comment type="subunit">
    <text evidence="1">Part of the 30S ribosomal subunit. Contacts protein S5. The interaction surface between S4 and S5 is involved in control of translational fidelity.</text>
</comment>
<comment type="similarity">
    <text evidence="1">Belongs to the universal ribosomal protein uS4 family.</text>
</comment>
<gene>
    <name evidence="1" type="primary">rpsD</name>
    <name type="ordered locus">Pcryo_0508</name>
</gene>
<protein>
    <recommendedName>
        <fullName evidence="1">Small ribosomal subunit protein uS4</fullName>
    </recommendedName>
    <alternativeName>
        <fullName evidence="3">30S ribosomal protein S4</fullName>
    </alternativeName>
</protein>
<accession>Q1QDG2</accession>
<sequence>MARYIGPKLKLSRREGTDLGLKSGVKPYDVKTKKSARPPGQHGVSRNKSSEYSLQLREKQKVKRIYGVLERQFANYYKEAARKRGATGENLLAMLESRLDNVVYRMGFGSTRAEARQLVSHRTVMVKKAGRDEFIRVNIPSIQLQDGDVIAIQEKSREQLRIKNAIELATQRGIPEWLDVDHSKLQGTFKKAPDRIDLPAEINESLIVELYSK</sequence>
<feature type="chain" id="PRO_0000293343" description="Small ribosomal subunit protein uS4">
    <location>
        <begin position="1"/>
        <end position="213"/>
    </location>
</feature>
<feature type="domain" description="S4 RNA-binding" evidence="1">
    <location>
        <begin position="97"/>
        <end position="163"/>
    </location>
</feature>
<feature type="region of interest" description="Disordered" evidence="2">
    <location>
        <begin position="16"/>
        <end position="53"/>
    </location>
</feature>
<feature type="compositionally biased region" description="Polar residues" evidence="2">
    <location>
        <begin position="44"/>
        <end position="53"/>
    </location>
</feature>
<dbReference type="EMBL" id="CP000323">
    <property type="protein sequence ID" value="ABE74291.1"/>
    <property type="molecule type" value="Genomic_DNA"/>
</dbReference>
<dbReference type="RefSeq" id="WP_011512865.1">
    <property type="nucleotide sequence ID" value="NC_007969.1"/>
</dbReference>
<dbReference type="SMR" id="Q1QDG2"/>
<dbReference type="STRING" id="335284.Pcryo_0508"/>
<dbReference type="KEGG" id="pcr:Pcryo_0508"/>
<dbReference type="eggNOG" id="COG0522">
    <property type="taxonomic scope" value="Bacteria"/>
</dbReference>
<dbReference type="HOGENOM" id="CLU_092403_0_2_6"/>
<dbReference type="Proteomes" id="UP000002425">
    <property type="component" value="Chromosome"/>
</dbReference>
<dbReference type="GO" id="GO:0015935">
    <property type="term" value="C:small ribosomal subunit"/>
    <property type="evidence" value="ECO:0007669"/>
    <property type="project" value="InterPro"/>
</dbReference>
<dbReference type="GO" id="GO:0019843">
    <property type="term" value="F:rRNA binding"/>
    <property type="evidence" value="ECO:0007669"/>
    <property type="project" value="UniProtKB-UniRule"/>
</dbReference>
<dbReference type="GO" id="GO:0003735">
    <property type="term" value="F:structural constituent of ribosome"/>
    <property type="evidence" value="ECO:0007669"/>
    <property type="project" value="InterPro"/>
</dbReference>
<dbReference type="GO" id="GO:0042274">
    <property type="term" value="P:ribosomal small subunit biogenesis"/>
    <property type="evidence" value="ECO:0007669"/>
    <property type="project" value="TreeGrafter"/>
</dbReference>
<dbReference type="GO" id="GO:0006412">
    <property type="term" value="P:translation"/>
    <property type="evidence" value="ECO:0007669"/>
    <property type="project" value="UniProtKB-UniRule"/>
</dbReference>
<dbReference type="CDD" id="cd00165">
    <property type="entry name" value="S4"/>
    <property type="match status" value="1"/>
</dbReference>
<dbReference type="FunFam" id="1.10.1050.10:FF:000001">
    <property type="entry name" value="30S ribosomal protein S4"/>
    <property type="match status" value="1"/>
</dbReference>
<dbReference type="FunFam" id="3.10.290.10:FF:000001">
    <property type="entry name" value="30S ribosomal protein S4"/>
    <property type="match status" value="1"/>
</dbReference>
<dbReference type="Gene3D" id="1.10.1050.10">
    <property type="entry name" value="Ribosomal Protein S4 Delta 41, Chain A, domain 1"/>
    <property type="match status" value="1"/>
</dbReference>
<dbReference type="Gene3D" id="3.10.290.10">
    <property type="entry name" value="RNA-binding S4 domain"/>
    <property type="match status" value="1"/>
</dbReference>
<dbReference type="HAMAP" id="MF_01306_B">
    <property type="entry name" value="Ribosomal_uS4_B"/>
    <property type="match status" value="1"/>
</dbReference>
<dbReference type="InterPro" id="IPR022801">
    <property type="entry name" value="Ribosomal_uS4"/>
</dbReference>
<dbReference type="InterPro" id="IPR005709">
    <property type="entry name" value="Ribosomal_uS4_bac-type"/>
</dbReference>
<dbReference type="InterPro" id="IPR018079">
    <property type="entry name" value="Ribosomal_uS4_CS"/>
</dbReference>
<dbReference type="InterPro" id="IPR001912">
    <property type="entry name" value="Ribosomal_uS4_N"/>
</dbReference>
<dbReference type="InterPro" id="IPR002942">
    <property type="entry name" value="S4_RNA-bd"/>
</dbReference>
<dbReference type="InterPro" id="IPR036986">
    <property type="entry name" value="S4_RNA-bd_sf"/>
</dbReference>
<dbReference type="NCBIfam" id="NF003717">
    <property type="entry name" value="PRK05327.1"/>
    <property type="match status" value="1"/>
</dbReference>
<dbReference type="NCBIfam" id="TIGR01017">
    <property type="entry name" value="rpsD_bact"/>
    <property type="match status" value="1"/>
</dbReference>
<dbReference type="PANTHER" id="PTHR11831">
    <property type="entry name" value="30S 40S RIBOSOMAL PROTEIN"/>
    <property type="match status" value="1"/>
</dbReference>
<dbReference type="PANTHER" id="PTHR11831:SF4">
    <property type="entry name" value="SMALL RIBOSOMAL SUBUNIT PROTEIN US4M"/>
    <property type="match status" value="1"/>
</dbReference>
<dbReference type="Pfam" id="PF00163">
    <property type="entry name" value="Ribosomal_S4"/>
    <property type="match status" value="1"/>
</dbReference>
<dbReference type="Pfam" id="PF01479">
    <property type="entry name" value="S4"/>
    <property type="match status" value="1"/>
</dbReference>
<dbReference type="SMART" id="SM01390">
    <property type="entry name" value="Ribosomal_S4"/>
    <property type="match status" value="1"/>
</dbReference>
<dbReference type="SMART" id="SM00363">
    <property type="entry name" value="S4"/>
    <property type="match status" value="1"/>
</dbReference>
<dbReference type="SUPFAM" id="SSF55174">
    <property type="entry name" value="Alpha-L RNA-binding motif"/>
    <property type="match status" value="1"/>
</dbReference>
<dbReference type="PROSITE" id="PS00632">
    <property type="entry name" value="RIBOSOMAL_S4"/>
    <property type="match status" value="1"/>
</dbReference>
<dbReference type="PROSITE" id="PS50889">
    <property type="entry name" value="S4"/>
    <property type="match status" value="1"/>
</dbReference>
<keyword id="KW-0687">Ribonucleoprotein</keyword>
<keyword id="KW-0689">Ribosomal protein</keyword>
<keyword id="KW-0694">RNA-binding</keyword>
<keyword id="KW-0699">rRNA-binding</keyword>
<name>RS4_PSYCK</name>
<evidence type="ECO:0000255" key="1">
    <source>
        <dbReference type="HAMAP-Rule" id="MF_01306"/>
    </source>
</evidence>
<evidence type="ECO:0000256" key="2">
    <source>
        <dbReference type="SAM" id="MobiDB-lite"/>
    </source>
</evidence>
<evidence type="ECO:0000305" key="3"/>